<proteinExistence type="inferred from homology"/>
<reference key="1">
    <citation type="submission" date="2007-10" db="EMBL/GenBank/DDBJ databases">
        <title>Complete sequence of chromosome 1 of Burkholderia multivorans ATCC 17616.</title>
        <authorList>
            <person name="Copeland A."/>
            <person name="Lucas S."/>
            <person name="Lapidus A."/>
            <person name="Barry K."/>
            <person name="Glavina del Rio T."/>
            <person name="Dalin E."/>
            <person name="Tice H."/>
            <person name="Pitluck S."/>
            <person name="Chain P."/>
            <person name="Malfatti S."/>
            <person name="Shin M."/>
            <person name="Vergez L."/>
            <person name="Schmutz J."/>
            <person name="Larimer F."/>
            <person name="Land M."/>
            <person name="Hauser L."/>
            <person name="Kyrpides N."/>
            <person name="Kim E."/>
            <person name="Tiedje J."/>
            <person name="Richardson P."/>
        </authorList>
    </citation>
    <scope>NUCLEOTIDE SEQUENCE [LARGE SCALE GENOMIC DNA]</scope>
    <source>
        <strain>ATCC 17616 / 249</strain>
    </source>
</reference>
<reference key="2">
    <citation type="submission" date="2007-04" db="EMBL/GenBank/DDBJ databases">
        <title>Complete genome sequence of Burkholderia multivorans ATCC 17616.</title>
        <authorList>
            <person name="Ohtsubo Y."/>
            <person name="Yamashita A."/>
            <person name="Kurokawa K."/>
            <person name="Takami H."/>
            <person name="Yuhara S."/>
            <person name="Nishiyama E."/>
            <person name="Endo R."/>
            <person name="Miyazaki R."/>
            <person name="Ono A."/>
            <person name="Yano K."/>
            <person name="Ito M."/>
            <person name="Sota M."/>
            <person name="Yuji N."/>
            <person name="Hattori M."/>
            <person name="Tsuda M."/>
        </authorList>
    </citation>
    <scope>NUCLEOTIDE SEQUENCE [LARGE SCALE GENOMIC DNA]</scope>
    <source>
        <strain>ATCC 17616 / 249</strain>
    </source>
</reference>
<keyword id="KW-0004">4Fe-4S</keyword>
<keyword id="KW-0963">Cytoplasm</keyword>
<keyword id="KW-0408">Iron</keyword>
<keyword id="KW-0411">Iron-sulfur</keyword>
<keyword id="KW-0479">Metal-binding</keyword>
<keyword id="KW-1185">Reference proteome</keyword>
<keyword id="KW-0949">S-adenosyl-L-methionine</keyword>
<keyword id="KW-0808">Transferase</keyword>
<keyword id="KW-0819">tRNA processing</keyword>
<dbReference type="EC" id="2.8.4.3" evidence="1"/>
<dbReference type="EMBL" id="CP000868">
    <property type="protein sequence ID" value="ABX14300.1"/>
    <property type="molecule type" value="Genomic_DNA"/>
</dbReference>
<dbReference type="EMBL" id="AP009385">
    <property type="protein sequence ID" value="BAG44546.1"/>
    <property type="molecule type" value="Genomic_DNA"/>
</dbReference>
<dbReference type="RefSeq" id="WP_006406545.1">
    <property type="nucleotide sequence ID" value="NC_010804.1"/>
</dbReference>
<dbReference type="SMR" id="A9AFF8"/>
<dbReference type="STRING" id="395019.BMULJ_02656"/>
<dbReference type="GeneID" id="89571239"/>
<dbReference type="KEGG" id="bmj:BMULJ_02656"/>
<dbReference type="KEGG" id="bmu:Bmul_0605"/>
<dbReference type="eggNOG" id="COG0621">
    <property type="taxonomic scope" value="Bacteria"/>
</dbReference>
<dbReference type="HOGENOM" id="CLU_018697_2_0_4"/>
<dbReference type="Proteomes" id="UP000008815">
    <property type="component" value="Chromosome 1"/>
</dbReference>
<dbReference type="GO" id="GO:0005829">
    <property type="term" value="C:cytosol"/>
    <property type="evidence" value="ECO:0007669"/>
    <property type="project" value="TreeGrafter"/>
</dbReference>
<dbReference type="GO" id="GO:0051539">
    <property type="term" value="F:4 iron, 4 sulfur cluster binding"/>
    <property type="evidence" value="ECO:0007669"/>
    <property type="project" value="UniProtKB-UniRule"/>
</dbReference>
<dbReference type="GO" id="GO:0046872">
    <property type="term" value="F:metal ion binding"/>
    <property type="evidence" value="ECO:0007669"/>
    <property type="project" value="UniProtKB-KW"/>
</dbReference>
<dbReference type="GO" id="GO:0035597">
    <property type="term" value="F:N6-isopentenyladenosine methylthiotransferase activity"/>
    <property type="evidence" value="ECO:0007669"/>
    <property type="project" value="TreeGrafter"/>
</dbReference>
<dbReference type="CDD" id="cd01335">
    <property type="entry name" value="Radical_SAM"/>
    <property type="match status" value="1"/>
</dbReference>
<dbReference type="FunFam" id="3.40.50.12160:FF:000001">
    <property type="entry name" value="tRNA-2-methylthio-N(6)-dimethylallyladenosine synthase"/>
    <property type="match status" value="1"/>
</dbReference>
<dbReference type="FunFam" id="3.80.30.20:FF:000001">
    <property type="entry name" value="tRNA-2-methylthio-N(6)-dimethylallyladenosine synthase 2"/>
    <property type="match status" value="1"/>
</dbReference>
<dbReference type="Gene3D" id="3.40.50.12160">
    <property type="entry name" value="Methylthiotransferase, N-terminal domain"/>
    <property type="match status" value="1"/>
</dbReference>
<dbReference type="Gene3D" id="3.80.30.20">
    <property type="entry name" value="tm_1862 like domain"/>
    <property type="match status" value="1"/>
</dbReference>
<dbReference type="HAMAP" id="MF_01864">
    <property type="entry name" value="tRNA_metthiotr_MiaB"/>
    <property type="match status" value="1"/>
</dbReference>
<dbReference type="InterPro" id="IPR006638">
    <property type="entry name" value="Elp3/MiaA/NifB-like_rSAM"/>
</dbReference>
<dbReference type="InterPro" id="IPR005839">
    <property type="entry name" value="Methylthiotransferase"/>
</dbReference>
<dbReference type="InterPro" id="IPR020612">
    <property type="entry name" value="Methylthiotransferase_CS"/>
</dbReference>
<dbReference type="InterPro" id="IPR013848">
    <property type="entry name" value="Methylthiotransferase_N"/>
</dbReference>
<dbReference type="InterPro" id="IPR038135">
    <property type="entry name" value="Methylthiotransferase_N_sf"/>
</dbReference>
<dbReference type="InterPro" id="IPR006463">
    <property type="entry name" value="MiaB_methiolase"/>
</dbReference>
<dbReference type="InterPro" id="IPR007197">
    <property type="entry name" value="rSAM"/>
</dbReference>
<dbReference type="InterPro" id="IPR023404">
    <property type="entry name" value="rSAM_horseshoe"/>
</dbReference>
<dbReference type="InterPro" id="IPR002792">
    <property type="entry name" value="TRAM_dom"/>
</dbReference>
<dbReference type="NCBIfam" id="TIGR01574">
    <property type="entry name" value="miaB-methiolase"/>
    <property type="match status" value="1"/>
</dbReference>
<dbReference type="NCBIfam" id="TIGR00089">
    <property type="entry name" value="MiaB/RimO family radical SAM methylthiotransferase"/>
    <property type="match status" value="1"/>
</dbReference>
<dbReference type="PANTHER" id="PTHR43020">
    <property type="entry name" value="CDK5 REGULATORY SUBUNIT-ASSOCIATED PROTEIN 1"/>
    <property type="match status" value="1"/>
</dbReference>
<dbReference type="PANTHER" id="PTHR43020:SF2">
    <property type="entry name" value="MITOCHONDRIAL TRNA METHYLTHIOTRANSFERASE CDK5RAP1"/>
    <property type="match status" value="1"/>
</dbReference>
<dbReference type="Pfam" id="PF04055">
    <property type="entry name" value="Radical_SAM"/>
    <property type="match status" value="1"/>
</dbReference>
<dbReference type="Pfam" id="PF01938">
    <property type="entry name" value="TRAM"/>
    <property type="match status" value="1"/>
</dbReference>
<dbReference type="Pfam" id="PF00919">
    <property type="entry name" value="UPF0004"/>
    <property type="match status" value="1"/>
</dbReference>
<dbReference type="SFLD" id="SFLDF00273">
    <property type="entry name" value="(dimethylallyl)adenosine_tRNA"/>
    <property type="match status" value="1"/>
</dbReference>
<dbReference type="SFLD" id="SFLDG01082">
    <property type="entry name" value="B12-binding_domain_containing"/>
    <property type="match status" value="1"/>
</dbReference>
<dbReference type="SFLD" id="SFLDS00029">
    <property type="entry name" value="Radical_SAM"/>
    <property type="match status" value="1"/>
</dbReference>
<dbReference type="SMART" id="SM00729">
    <property type="entry name" value="Elp3"/>
    <property type="match status" value="1"/>
</dbReference>
<dbReference type="SUPFAM" id="SSF102114">
    <property type="entry name" value="Radical SAM enzymes"/>
    <property type="match status" value="1"/>
</dbReference>
<dbReference type="PROSITE" id="PS51449">
    <property type="entry name" value="MTTASE_N"/>
    <property type="match status" value="1"/>
</dbReference>
<dbReference type="PROSITE" id="PS01278">
    <property type="entry name" value="MTTASE_RADICAL"/>
    <property type="match status" value="1"/>
</dbReference>
<dbReference type="PROSITE" id="PS51918">
    <property type="entry name" value="RADICAL_SAM"/>
    <property type="match status" value="1"/>
</dbReference>
<dbReference type="PROSITE" id="PS50926">
    <property type="entry name" value="TRAM"/>
    <property type="match status" value="1"/>
</dbReference>
<feature type="chain" id="PRO_0000374182" description="tRNA-2-methylthio-N(6)-dimethylallyladenosine synthase">
    <location>
        <begin position="1"/>
        <end position="457"/>
    </location>
</feature>
<feature type="domain" description="MTTase N-terminal" evidence="1">
    <location>
        <begin position="3"/>
        <end position="120"/>
    </location>
</feature>
<feature type="domain" description="Radical SAM core" evidence="2">
    <location>
        <begin position="143"/>
        <end position="377"/>
    </location>
</feature>
<feature type="domain" description="TRAM" evidence="1">
    <location>
        <begin position="380"/>
        <end position="447"/>
    </location>
</feature>
<feature type="binding site" evidence="1">
    <location>
        <position position="12"/>
    </location>
    <ligand>
        <name>[4Fe-4S] cluster</name>
        <dbReference type="ChEBI" id="CHEBI:49883"/>
        <label>1</label>
    </ligand>
</feature>
<feature type="binding site" evidence="1">
    <location>
        <position position="49"/>
    </location>
    <ligand>
        <name>[4Fe-4S] cluster</name>
        <dbReference type="ChEBI" id="CHEBI:49883"/>
        <label>1</label>
    </ligand>
</feature>
<feature type="binding site" evidence="1">
    <location>
        <position position="83"/>
    </location>
    <ligand>
        <name>[4Fe-4S] cluster</name>
        <dbReference type="ChEBI" id="CHEBI:49883"/>
        <label>1</label>
    </ligand>
</feature>
<feature type="binding site" evidence="1">
    <location>
        <position position="157"/>
    </location>
    <ligand>
        <name>[4Fe-4S] cluster</name>
        <dbReference type="ChEBI" id="CHEBI:49883"/>
        <label>2</label>
        <note>4Fe-4S-S-AdoMet</note>
    </ligand>
</feature>
<feature type="binding site" evidence="1">
    <location>
        <position position="161"/>
    </location>
    <ligand>
        <name>[4Fe-4S] cluster</name>
        <dbReference type="ChEBI" id="CHEBI:49883"/>
        <label>2</label>
        <note>4Fe-4S-S-AdoMet</note>
    </ligand>
</feature>
<feature type="binding site" evidence="1">
    <location>
        <position position="164"/>
    </location>
    <ligand>
        <name>[4Fe-4S] cluster</name>
        <dbReference type="ChEBI" id="CHEBI:49883"/>
        <label>2</label>
        <note>4Fe-4S-S-AdoMet</note>
    </ligand>
</feature>
<protein>
    <recommendedName>
        <fullName evidence="1">tRNA-2-methylthio-N(6)-dimethylallyladenosine synthase</fullName>
        <ecNumber evidence="1">2.8.4.3</ecNumber>
    </recommendedName>
    <alternativeName>
        <fullName evidence="1">(Dimethylallyl)adenosine tRNA methylthiotransferase MiaB</fullName>
    </alternativeName>
    <alternativeName>
        <fullName evidence="1">tRNA-i(6)A37 methylthiotransferase</fullName>
    </alternativeName>
</protein>
<sequence length="457" mass="50739">MTKKVYVKTFGCQMNEYDSDKMVDVLNAAEGLEKTDSPEDADIILFNTCSVREKAQEKVFSDLGRVRELKEAKPDLLIGVGGCVASQEGASIVSRAPYVDLVFGPQTLHRLPQMIDARRTSGRAQVDITFPEIEKFDHLPPARVEGPTAFVSIMEGCSKYCSYCVVPYTRGDEVSRPLDDVLTEVAGLADQGVREVTLLGQNVNAYRGALTAGSSEVADFATLIEYVADIPGIERIRYTTSHPKEFTQRLIDTYAKVPKLVNHLHLPVQHGSDRILMAMKRGYTVLEYKSVIRKLRAIRPDLSLSTDLIVGFPGETEEDFDKMMALVHDMRYDTSFSFIYSPRPGTPAANLHDDTPRDVKLKRLQLVQATIEENVARISQSMVGKVERILVEGPSRKDPNELAGRTENNRVVNFPAPLAAHPRLIGQMIDVKINHAYPHSLRGELVLVSDDASAATH</sequence>
<name>MIAB_BURM1</name>
<accession>A9AFF8</accession>
<evidence type="ECO:0000255" key="1">
    <source>
        <dbReference type="HAMAP-Rule" id="MF_01864"/>
    </source>
</evidence>
<evidence type="ECO:0000255" key="2">
    <source>
        <dbReference type="PROSITE-ProRule" id="PRU01266"/>
    </source>
</evidence>
<organism>
    <name type="scientific">Burkholderia multivorans (strain ATCC 17616 / 249)</name>
    <dbReference type="NCBI Taxonomy" id="395019"/>
    <lineage>
        <taxon>Bacteria</taxon>
        <taxon>Pseudomonadati</taxon>
        <taxon>Pseudomonadota</taxon>
        <taxon>Betaproteobacteria</taxon>
        <taxon>Burkholderiales</taxon>
        <taxon>Burkholderiaceae</taxon>
        <taxon>Burkholderia</taxon>
        <taxon>Burkholderia cepacia complex</taxon>
    </lineage>
</organism>
<gene>
    <name evidence="1" type="primary">miaB</name>
    <name type="ordered locus">Bmul_0605</name>
    <name type="ordered locus">BMULJ_02656</name>
</gene>
<comment type="function">
    <text evidence="1">Catalyzes the methylthiolation of N6-(dimethylallyl)adenosine (i(6)A), leading to the formation of 2-methylthio-N6-(dimethylallyl)adenosine (ms(2)i(6)A) at position 37 in tRNAs that read codons beginning with uridine.</text>
</comment>
<comment type="catalytic activity">
    <reaction evidence="1">
        <text>N(6)-dimethylallyladenosine(37) in tRNA + (sulfur carrier)-SH + AH2 + 2 S-adenosyl-L-methionine = 2-methylsulfanyl-N(6)-dimethylallyladenosine(37) in tRNA + (sulfur carrier)-H + 5'-deoxyadenosine + L-methionine + A + S-adenosyl-L-homocysteine + 2 H(+)</text>
        <dbReference type="Rhea" id="RHEA:37067"/>
        <dbReference type="Rhea" id="RHEA-COMP:10375"/>
        <dbReference type="Rhea" id="RHEA-COMP:10376"/>
        <dbReference type="Rhea" id="RHEA-COMP:14737"/>
        <dbReference type="Rhea" id="RHEA-COMP:14739"/>
        <dbReference type="ChEBI" id="CHEBI:13193"/>
        <dbReference type="ChEBI" id="CHEBI:15378"/>
        <dbReference type="ChEBI" id="CHEBI:17319"/>
        <dbReference type="ChEBI" id="CHEBI:17499"/>
        <dbReference type="ChEBI" id="CHEBI:29917"/>
        <dbReference type="ChEBI" id="CHEBI:57844"/>
        <dbReference type="ChEBI" id="CHEBI:57856"/>
        <dbReference type="ChEBI" id="CHEBI:59789"/>
        <dbReference type="ChEBI" id="CHEBI:64428"/>
        <dbReference type="ChEBI" id="CHEBI:74415"/>
        <dbReference type="ChEBI" id="CHEBI:74417"/>
        <dbReference type="EC" id="2.8.4.3"/>
    </reaction>
</comment>
<comment type="cofactor">
    <cofactor evidence="1">
        <name>[4Fe-4S] cluster</name>
        <dbReference type="ChEBI" id="CHEBI:49883"/>
    </cofactor>
    <text evidence="1">Binds 2 [4Fe-4S] clusters. One cluster is coordinated with 3 cysteines and an exchangeable S-adenosyl-L-methionine.</text>
</comment>
<comment type="subunit">
    <text evidence="1">Monomer.</text>
</comment>
<comment type="subcellular location">
    <subcellularLocation>
        <location evidence="1">Cytoplasm</location>
    </subcellularLocation>
</comment>
<comment type="similarity">
    <text evidence="1">Belongs to the methylthiotransferase family. MiaB subfamily.</text>
</comment>